<proteinExistence type="inferred from homology"/>
<reference key="1">
    <citation type="journal article" date="2008" name="BMC Genomics">
        <title>Genome sequence and rapid evolution of the rice pathogen Xanthomonas oryzae pv. oryzae PXO99A.</title>
        <authorList>
            <person name="Salzberg S.L."/>
            <person name="Sommer D.D."/>
            <person name="Schatz M.C."/>
            <person name="Phillippy A.M."/>
            <person name="Rabinowicz P.D."/>
            <person name="Tsuge S."/>
            <person name="Furutani A."/>
            <person name="Ochiai H."/>
            <person name="Delcher A.L."/>
            <person name="Kelley D."/>
            <person name="Madupu R."/>
            <person name="Puiu D."/>
            <person name="Radune D."/>
            <person name="Shumway M."/>
            <person name="Trapnell C."/>
            <person name="Aparna G."/>
            <person name="Jha G."/>
            <person name="Pandey A."/>
            <person name="Patil P.B."/>
            <person name="Ishihara H."/>
            <person name="Meyer D.F."/>
            <person name="Szurek B."/>
            <person name="Verdier V."/>
            <person name="Koebnik R."/>
            <person name="Dow J.M."/>
            <person name="Ryan R.P."/>
            <person name="Hirata H."/>
            <person name="Tsuyumu S."/>
            <person name="Won Lee S."/>
            <person name="Seo Y.-S."/>
            <person name="Sriariyanum M."/>
            <person name="Ronald P.C."/>
            <person name="Sonti R.V."/>
            <person name="Van Sluys M.-A."/>
            <person name="Leach J.E."/>
            <person name="White F.F."/>
            <person name="Bogdanove A.J."/>
        </authorList>
    </citation>
    <scope>NUCLEOTIDE SEQUENCE [LARGE SCALE GENOMIC DNA]</scope>
    <source>
        <strain>PXO99A</strain>
    </source>
</reference>
<protein>
    <recommendedName>
        <fullName evidence="1">GMP synthase [glutamine-hydrolyzing]</fullName>
        <ecNumber evidence="1">6.3.5.2</ecNumber>
    </recommendedName>
    <alternativeName>
        <fullName evidence="1">GMP synthetase</fullName>
    </alternativeName>
    <alternativeName>
        <fullName evidence="1">Glutamine amidotransferase</fullName>
    </alternativeName>
</protein>
<dbReference type="EC" id="6.3.5.2" evidence="1"/>
<dbReference type="EMBL" id="CP000967">
    <property type="protein sequence ID" value="ACD59023.1"/>
    <property type="molecule type" value="Genomic_DNA"/>
</dbReference>
<dbReference type="RefSeq" id="WP_012444991.1">
    <property type="nucleotide sequence ID" value="NC_010717.2"/>
</dbReference>
<dbReference type="SMR" id="B2SLG1"/>
<dbReference type="MEROPS" id="C26.957"/>
<dbReference type="KEGG" id="xop:PXO_00906"/>
<dbReference type="eggNOG" id="COG0518">
    <property type="taxonomic scope" value="Bacteria"/>
</dbReference>
<dbReference type="eggNOG" id="COG0519">
    <property type="taxonomic scope" value="Bacteria"/>
</dbReference>
<dbReference type="HOGENOM" id="CLU_014340_0_5_6"/>
<dbReference type="UniPathway" id="UPA00189">
    <property type="reaction ID" value="UER00296"/>
</dbReference>
<dbReference type="Proteomes" id="UP000001740">
    <property type="component" value="Chromosome"/>
</dbReference>
<dbReference type="GO" id="GO:0005829">
    <property type="term" value="C:cytosol"/>
    <property type="evidence" value="ECO:0007669"/>
    <property type="project" value="TreeGrafter"/>
</dbReference>
<dbReference type="GO" id="GO:0005524">
    <property type="term" value="F:ATP binding"/>
    <property type="evidence" value="ECO:0007669"/>
    <property type="project" value="UniProtKB-UniRule"/>
</dbReference>
<dbReference type="GO" id="GO:0003921">
    <property type="term" value="F:GMP synthase activity"/>
    <property type="evidence" value="ECO:0007669"/>
    <property type="project" value="InterPro"/>
</dbReference>
<dbReference type="CDD" id="cd01742">
    <property type="entry name" value="GATase1_GMP_Synthase"/>
    <property type="match status" value="1"/>
</dbReference>
<dbReference type="CDD" id="cd01997">
    <property type="entry name" value="GMP_synthase_C"/>
    <property type="match status" value="1"/>
</dbReference>
<dbReference type="FunFam" id="3.30.300.10:FF:000002">
    <property type="entry name" value="GMP synthase [glutamine-hydrolyzing]"/>
    <property type="match status" value="1"/>
</dbReference>
<dbReference type="FunFam" id="3.40.50.620:FF:000001">
    <property type="entry name" value="GMP synthase [glutamine-hydrolyzing]"/>
    <property type="match status" value="1"/>
</dbReference>
<dbReference type="FunFam" id="3.40.50.880:FF:000001">
    <property type="entry name" value="GMP synthase [glutamine-hydrolyzing]"/>
    <property type="match status" value="1"/>
</dbReference>
<dbReference type="Gene3D" id="3.30.300.10">
    <property type="match status" value="1"/>
</dbReference>
<dbReference type="Gene3D" id="3.40.50.880">
    <property type="match status" value="1"/>
</dbReference>
<dbReference type="Gene3D" id="3.40.50.620">
    <property type="entry name" value="HUPs"/>
    <property type="match status" value="1"/>
</dbReference>
<dbReference type="HAMAP" id="MF_00344">
    <property type="entry name" value="GMP_synthase"/>
    <property type="match status" value="1"/>
</dbReference>
<dbReference type="InterPro" id="IPR029062">
    <property type="entry name" value="Class_I_gatase-like"/>
</dbReference>
<dbReference type="InterPro" id="IPR017926">
    <property type="entry name" value="GATASE"/>
</dbReference>
<dbReference type="InterPro" id="IPR001674">
    <property type="entry name" value="GMP_synth_C"/>
</dbReference>
<dbReference type="InterPro" id="IPR004739">
    <property type="entry name" value="GMP_synth_GATase"/>
</dbReference>
<dbReference type="InterPro" id="IPR022955">
    <property type="entry name" value="GMP_synthase"/>
</dbReference>
<dbReference type="InterPro" id="IPR025777">
    <property type="entry name" value="GMPS_ATP_PPase_dom"/>
</dbReference>
<dbReference type="InterPro" id="IPR022310">
    <property type="entry name" value="NAD/GMP_synthase"/>
</dbReference>
<dbReference type="InterPro" id="IPR014729">
    <property type="entry name" value="Rossmann-like_a/b/a_fold"/>
</dbReference>
<dbReference type="NCBIfam" id="TIGR00884">
    <property type="entry name" value="guaA_Cterm"/>
    <property type="match status" value="1"/>
</dbReference>
<dbReference type="NCBIfam" id="TIGR00888">
    <property type="entry name" value="guaA_Nterm"/>
    <property type="match status" value="1"/>
</dbReference>
<dbReference type="NCBIfam" id="NF000848">
    <property type="entry name" value="PRK00074.1"/>
    <property type="match status" value="1"/>
</dbReference>
<dbReference type="PANTHER" id="PTHR11922:SF2">
    <property type="entry name" value="GMP SYNTHASE [GLUTAMINE-HYDROLYZING]"/>
    <property type="match status" value="1"/>
</dbReference>
<dbReference type="PANTHER" id="PTHR11922">
    <property type="entry name" value="GMP SYNTHASE-RELATED"/>
    <property type="match status" value="1"/>
</dbReference>
<dbReference type="Pfam" id="PF00117">
    <property type="entry name" value="GATase"/>
    <property type="match status" value="1"/>
</dbReference>
<dbReference type="Pfam" id="PF00958">
    <property type="entry name" value="GMP_synt_C"/>
    <property type="match status" value="1"/>
</dbReference>
<dbReference type="Pfam" id="PF02540">
    <property type="entry name" value="NAD_synthase"/>
    <property type="match status" value="1"/>
</dbReference>
<dbReference type="PRINTS" id="PR00097">
    <property type="entry name" value="ANTSNTHASEII"/>
</dbReference>
<dbReference type="PRINTS" id="PR00099">
    <property type="entry name" value="CPSGATASE"/>
</dbReference>
<dbReference type="PRINTS" id="PR00096">
    <property type="entry name" value="GATASE"/>
</dbReference>
<dbReference type="SUPFAM" id="SSF52402">
    <property type="entry name" value="Adenine nucleotide alpha hydrolases-like"/>
    <property type="match status" value="1"/>
</dbReference>
<dbReference type="SUPFAM" id="SSF52317">
    <property type="entry name" value="Class I glutamine amidotransferase-like"/>
    <property type="match status" value="1"/>
</dbReference>
<dbReference type="SUPFAM" id="SSF54810">
    <property type="entry name" value="GMP synthetase C-terminal dimerisation domain"/>
    <property type="match status" value="1"/>
</dbReference>
<dbReference type="PROSITE" id="PS51273">
    <property type="entry name" value="GATASE_TYPE_1"/>
    <property type="match status" value="1"/>
</dbReference>
<dbReference type="PROSITE" id="PS51553">
    <property type="entry name" value="GMPS_ATP_PPASE"/>
    <property type="match status" value="1"/>
</dbReference>
<name>GUAA_XANOP</name>
<evidence type="ECO:0000255" key="1">
    <source>
        <dbReference type="HAMAP-Rule" id="MF_00344"/>
    </source>
</evidence>
<keyword id="KW-0067">ATP-binding</keyword>
<keyword id="KW-0315">Glutamine amidotransferase</keyword>
<keyword id="KW-0332">GMP biosynthesis</keyword>
<keyword id="KW-0436">Ligase</keyword>
<keyword id="KW-0547">Nucleotide-binding</keyword>
<keyword id="KW-0658">Purine biosynthesis</keyword>
<accession>B2SLG1</accession>
<feature type="chain" id="PRO_1000120453" description="GMP synthase [glutamine-hydrolyzing]">
    <location>
        <begin position="1"/>
        <end position="521"/>
    </location>
</feature>
<feature type="domain" description="Glutamine amidotransferase type-1" evidence="1">
    <location>
        <begin position="8"/>
        <end position="203"/>
    </location>
</feature>
<feature type="domain" description="GMPS ATP-PPase" evidence="1">
    <location>
        <begin position="204"/>
        <end position="396"/>
    </location>
</feature>
<feature type="active site" description="Nucleophile" evidence="1">
    <location>
        <position position="85"/>
    </location>
</feature>
<feature type="active site" evidence="1">
    <location>
        <position position="177"/>
    </location>
</feature>
<feature type="active site" evidence="1">
    <location>
        <position position="179"/>
    </location>
</feature>
<feature type="binding site" evidence="1">
    <location>
        <begin position="231"/>
        <end position="237"/>
    </location>
    <ligand>
        <name>ATP</name>
        <dbReference type="ChEBI" id="CHEBI:30616"/>
    </ligand>
</feature>
<gene>
    <name evidence="1" type="primary">guaA</name>
    <name type="ordered locus">PXO_00906</name>
</gene>
<organism>
    <name type="scientific">Xanthomonas oryzae pv. oryzae (strain PXO99A)</name>
    <dbReference type="NCBI Taxonomy" id="360094"/>
    <lineage>
        <taxon>Bacteria</taxon>
        <taxon>Pseudomonadati</taxon>
        <taxon>Pseudomonadota</taxon>
        <taxon>Gammaproteobacteria</taxon>
        <taxon>Lysobacterales</taxon>
        <taxon>Lysobacteraceae</taxon>
        <taxon>Xanthomonas</taxon>
    </lineage>
</organism>
<sequence length="521" mass="57122">MTNIHTDKILILDFGAQYTQLIARRIREIGVYCEIWAWDHDPSEIAGFGAKGIILSGGPESTTLPGAPVAPQEVFDSGLPVFGICYGMQTLAAQLGGATEAADQREFGHAEVDVIAADALFAGLTDHAGAPRLNVWMSHGDHVSQVPPGFTITATTDRIPVAAMSNEDKRWYGVQFHPEVTHTLQGQTLLRRFVVDICGCQTLWTAANIIDDQIARVREQVGDDDVILGLSGGVDSSVVAALLHKAIGDKLTCVFVDTGLLRWQEGDQVMAMFAEHMGVKVIRVNAADRYFAKLEGVSDPEAKRKIIGNLFVEIFDEESNTLANAKWLAQGTIYPDVIESAGSKTGKAHVIKSHHNVGGLPQHMKLGLVEPLRELFKDEVRRLGVELGLPRTMVYRHPFPGPGLGVRILGEVKREYAELLAKADAIFIDELRKADLYDKISQAFAVFLPVKSVGVVGDARAYEWVIALRAVETIDFMTAHWAHLPYDFLGTVSNRIINELRGVSRVVYDISGKPPATIEWE</sequence>
<comment type="function">
    <text evidence="1">Catalyzes the synthesis of GMP from XMP.</text>
</comment>
<comment type="catalytic activity">
    <reaction evidence="1">
        <text>XMP + L-glutamine + ATP + H2O = GMP + L-glutamate + AMP + diphosphate + 2 H(+)</text>
        <dbReference type="Rhea" id="RHEA:11680"/>
        <dbReference type="ChEBI" id="CHEBI:15377"/>
        <dbReference type="ChEBI" id="CHEBI:15378"/>
        <dbReference type="ChEBI" id="CHEBI:29985"/>
        <dbReference type="ChEBI" id="CHEBI:30616"/>
        <dbReference type="ChEBI" id="CHEBI:33019"/>
        <dbReference type="ChEBI" id="CHEBI:57464"/>
        <dbReference type="ChEBI" id="CHEBI:58115"/>
        <dbReference type="ChEBI" id="CHEBI:58359"/>
        <dbReference type="ChEBI" id="CHEBI:456215"/>
        <dbReference type="EC" id="6.3.5.2"/>
    </reaction>
</comment>
<comment type="pathway">
    <text evidence="1">Purine metabolism; GMP biosynthesis; GMP from XMP (L-Gln route): step 1/1.</text>
</comment>
<comment type="subunit">
    <text evidence="1">Homodimer.</text>
</comment>